<sequence>MGPGPPAAGAAPSPRPLSLVARLSYAVGHFLNDLCASMWFTYLLLYLHSVRAYSSRGAGLLLLLGQVADGLCTPLVGYEADRAASCCARYGPRKAWHLVGTVCVLLSFPFIFSPCLGCGAATPEWAALLYYGPFIVIFQFGWASTQISHLSLIPELVTNDHEKVELTALRYAFTVVANITVYGAAWLLLHLQGSSRVEPTQDISISDQLGGQDVPVFRNLSLLVVGVGAVFSLLFHLGTRERRRPHAEEPGEHTPLLAPATAQPLLLWKHWLREPAFYQVGILYMTTRLIVNLSQTYMAMYLTYSLHLPKKFIATIPLVMYLSGFLSSFLMKPINKCIGRNMTYFSGLLVILAFAAWVALAEGLGVAVYAAAVLLGAGCATILVTSLAMTADLIGPHTNSGAFVYGSMSFLDKVANGLAVMAIQSLHPCPSELCCRACVSFYHWAMVAVTGGVGVAAALCLCSLLLWPTRLRRWDRDARP</sequence>
<accession>Q6NUT3</accession>
<accession>A8MXP7</accession>
<accession>D6W615</accession>
<accession>E9PAJ8</accession>
<accession>Q8N459</accession>
<keyword id="KW-0007">Acetylation</keyword>
<keyword id="KW-0025">Alternative splicing</keyword>
<keyword id="KW-0029">Amino-acid transport</keyword>
<keyword id="KW-0458">Lysosome</keyword>
<keyword id="KW-0470">Melanin biosynthesis</keyword>
<keyword id="KW-0472">Membrane</keyword>
<keyword id="KW-0597">Phosphoprotein</keyword>
<keyword id="KW-1267">Proteomics identification</keyword>
<keyword id="KW-1185">Reference proteome</keyword>
<keyword id="KW-0812">Transmembrane</keyword>
<keyword id="KW-1133">Transmembrane helix</keyword>
<keyword id="KW-0813">Transport</keyword>
<feature type="chain" id="PRO_0000274522" description="Major facilitator superfamily domain-containing protein 12">
    <location>
        <begin position="1"/>
        <end position="480"/>
    </location>
</feature>
<feature type="topological domain" description="Cytoplasmic" evidence="9">
    <location>
        <begin position="1"/>
        <end position="26"/>
    </location>
</feature>
<feature type="transmembrane region" description="Helical" evidence="1">
    <location>
        <begin position="27"/>
        <end position="47"/>
    </location>
</feature>
<feature type="topological domain" description="Lumenal" evidence="9">
    <location>
        <begin position="48"/>
        <end position="56"/>
    </location>
</feature>
<feature type="transmembrane region" description="Helical" evidence="1">
    <location>
        <begin position="57"/>
        <end position="77"/>
    </location>
</feature>
<feature type="topological domain" description="Cytoplasmic" evidence="9">
    <location>
        <begin position="78"/>
        <end position="97"/>
    </location>
</feature>
<feature type="transmembrane region" description="Helical" evidence="1">
    <location>
        <begin position="98"/>
        <end position="118"/>
    </location>
</feature>
<feature type="topological domain" description="Lumenal" evidence="9">
    <location>
        <begin position="119"/>
        <end position="124"/>
    </location>
</feature>
<feature type="transmembrane region" description="Helical" evidence="1">
    <location>
        <begin position="125"/>
        <end position="145"/>
    </location>
</feature>
<feature type="topological domain" description="Cytoplasmic" evidence="9">
    <location>
        <begin position="146"/>
        <end position="170"/>
    </location>
</feature>
<feature type="transmembrane region" description="Helical" evidence="1">
    <location>
        <begin position="171"/>
        <end position="191"/>
    </location>
</feature>
<feature type="topological domain" description="Lumenal" evidence="9">
    <location>
        <begin position="192"/>
        <end position="218"/>
    </location>
</feature>
<feature type="transmembrane region" description="Helical" evidence="1">
    <location>
        <begin position="219"/>
        <end position="239"/>
    </location>
</feature>
<feature type="topological domain" description="Cytoplasmic" evidence="9">
    <location>
        <begin position="240"/>
        <end position="279"/>
    </location>
</feature>
<feature type="transmembrane region" description="Helical" evidence="1">
    <location>
        <begin position="280"/>
        <end position="302"/>
    </location>
</feature>
<feature type="topological domain" description="Lumenal" evidence="9">
    <location>
        <begin position="303"/>
        <end position="310"/>
    </location>
</feature>
<feature type="transmembrane region" description="Helical" evidence="1">
    <location>
        <begin position="311"/>
        <end position="331"/>
    </location>
</feature>
<feature type="topological domain" description="Cytoplasmic" evidence="9">
    <location>
        <begin position="332"/>
        <end position="347"/>
    </location>
</feature>
<feature type="transmembrane region" description="Helical" evidence="1">
    <location>
        <begin position="348"/>
        <end position="368"/>
    </location>
</feature>
<feature type="transmembrane region" description="Helical" evidence="1">
    <location>
        <begin position="369"/>
        <end position="389"/>
    </location>
</feature>
<feature type="topological domain" description="Cytoplasmic" evidence="9">
    <location>
        <begin position="390"/>
        <end position="402"/>
    </location>
</feature>
<feature type="transmembrane region" description="Helical" evidence="1">
    <location>
        <begin position="403"/>
        <end position="423"/>
    </location>
</feature>
<feature type="topological domain" description="Lumenal" evidence="9">
    <location>
        <begin position="424"/>
        <end position="446"/>
    </location>
</feature>
<feature type="transmembrane region" description="Helical" evidence="1">
    <location>
        <begin position="447"/>
        <end position="467"/>
    </location>
</feature>
<feature type="topological domain" description="Cytoplasmic" evidence="9">
    <location>
        <begin position="468"/>
        <end position="480"/>
    </location>
</feature>
<feature type="modified residue" description="N-acetylmethionine" evidence="2">
    <location>
        <position position="1"/>
    </location>
</feature>
<feature type="modified residue" description="Phosphothreonine; by MTOR" evidence="6">
    <location>
        <position position="254"/>
    </location>
</feature>
<feature type="splice variant" id="VSP_022779" description="In isoform 2." evidence="7">
    <location>
        <begin position="92"/>
        <end position="100"/>
    </location>
</feature>
<feature type="splice variant" id="VSP_047665" description="In isoform 3." evidence="9">
    <original>WDRDARP</original>
    <variation>SFLAWRRGRGEDKGPGYSWIPTVLVQPPRPTSPFLWEAPLAWRCTRKKWSGAGTKPWPREDWGTH</variation>
    <location>
        <begin position="474"/>
        <end position="480"/>
    </location>
</feature>
<feature type="splice variant" id="VSP_047666" description="In isoform 4." evidence="9">
    <location>
        <begin position="474"/>
        <end position="480"/>
    </location>
</feature>
<feature type="sequence variant" id="VAR_030309" description="Influences skin pigmentation; dbSNP:rs2240751." evidence="4">
    <original>Y</original>
    <variation>H</variation>
    <location>
        <position position="182"/>
    </location>
</feature>
<feature type="sequence variant" id="VAR_050300" description="In dbSNP:rs34562175.">
    <original>I</original>
    <variation>V</variation>
    <location>
        <position position="203"/>
    </location>
</feature>
<feature type="sequence variant" id="VAR_030310" description="In dbSNP:rs10414812.">
    <original>R</original>
    <variation>H</variation>
    <location>
        <position position="243"/>
    </location>
</feature>
<feature type="sequence variant" id="VAR_050301" description="In dbSNP:rs34878396.">
    <original>G</original>
    <variation>S</variation>
    <location>
        <position position="395"/>
    </location>
</feature>
<feature type="sequence variant" id="VAR_030311" description="In dbSNP:rs7252640.">
    <original>R</original>
    <variation>C</variation>
    <location>
        <position position="476"/>
    </location>
</feature>
<feature type="mutagenesis site" description="Does not affect phosphorylation by MTOR." evidence="6">
    <original>S</original>
    <variation>A</variation>
    <location>
        <position position="13"/>
    </location>
</feature>
<feature type="mutagenesis site" description="Does not affect phosphorylation by MTOR." evidence="6">
    <original>T</original>
    <variation>A</variation>
    <location>
        <position position="73"/>
    </location>
</feature>
<feature type="mutagenesis site" description="Does not affect phosphorylation by MTOR." evidence="6">
    <original>S</original>
    <variation>A</variation>
    <location>
        <position position="113"/>
    </location>
</feature>
<feature type="mutagenesis site" description="Does not affect phosphorylation by MTOR." evidence="6">
    <original>T</original>
    <variation>A</variation>
    <location>
        <position position="122"/>
    </location>
</feature>
<feature type="mutagenesis site" description="Abolished phosphorylation by MTOR; dominant-negative inhibitor of cysteine transporter activity." evidence="6">
    <original>T</original>
    <variation>A</variation>
    <location>
        <position position="254"/>
    </location>
</feature>
<feature type="mutagenesis site" description="Mimics phosphorylation; enhanced cysteine and cystine storage in lysosomes." evidence="6">
    <original>T</original>
    <variation>D</variation>
    <location>
        <position position="254"/>
    </location>
</feature>
<feature type="mutagenesis site" description="Reduced localization to lysosomes and redirection to the cell membrane." evidence="5">
    <original>LL</original>
    <variation>AA</variation>
    <location>
        <begin position="256"/>
        <end position="257"/>
    </location>
</feature>
<feature type="sequence conflict" description="In Ref. 3; AAH68439." evidence="9" ref="3">
    <original>F</original>
    <variation>L</variation>
    <location>
        <position position="441"/>
    </location>
</feature>
<reference key="1">
    <citation type="journal article" date="2004" name="Nature">
        <title>The DNA sequence and biology of human chromosome 19.</title>
        <authorList>
            <person name="Grimwood J."/>
            <person name="Gordon L.A."/>
            <person name="Olsen A.S."/>
            <person name="Terry A."/>
            <person name="Schmutz J."/>
            <person name="Lamerdin J.E."/>
            <person name="Hellsten U."/>
            <person name="Goodstein D."/>
            <person name="Couronne O."/>
            <person name="Tran-Gyamfi M."/>
            <person name="Aerts A."/>
            <person name="Altherr M."/>
            <person name="Ashworth L."/>
            <person name="Bajorek E."/>
            <person name="Black S."/>
            <person name="Branscomb E."/>
            <person name="Caenepeel S."/>
            <person name="Carrano A.V."/>
            <person name="Caoile C."/>
            <person name="Chan Y.M."/>
            <person name="Christensen M."/>
            <person name="Cleland C.A."/>
            <person name="Copeland A."/>
            <person name="Dalin E."/>
            <person name="Dehal P."/>
            <person name="Denys M."/>
            <person name="Detter J.C."/>
            <person name="Escobar J."/>
            <person name="Flowers D."/>
            <person name="Fotopulos D."/>
            <person name="Garcia C."/>
            <person name="Georgescu A.M."/>
            <person name="Glavina T."/>
            <person name="Gomez M."/>
            <person name="Gonzales E."/>
            <person name="Groza M."/>
            <person name="Hammon N."/>
            <person name="Hawkins T."/>
            <person name="Haydu L."/>
            <person name="Ho I."/>
            <person name="Huang W."/>
            <person name="Israni S."/>
            <person name="Jett J."/>
            <person name="Kadner K."/>
            <person name="Kimball H."/>
            <person name="Kobayashi A."/>
            <person name="Larionov V."/>
            <person name="Leem S.-H."/>
            <person name="Lopez F."/>
            <person name="Lou Y."/>
            <person name="Lowry S."/>
            <person name="Malfatti S."/>
            <person name="Martinez D."/>
            <person name="McCready P.M."/>
            <person name="Medina C."/>
            <person name="Morgan J."/>
            <person name="Nelson K."/>
            <person name="Nolan M."/>
            <person name="Ovcharenko I."/>
            <person name="Pitluck S."/>
            <person name="Pollard M."/>
            <person name="Popkie A.P."/>
            <person name="Predki P."/>
            <person name="Quan G."/>
            <person name="Ramirez L."/>
            <person name="Rash S."/>
            <person name="Retterer J."/>
            <person name="Rodriguez A."/>
            <person name="Rogers S."/>
            <person name="Salamov A."/>
            <person name="Salazar A."/>
            <person name="She X."/>
            <person name="Smith D."/>
            <person name="Slezak T."/>
            <person name="Solovyev V."/>
            <person name="Thayer N."/>
            <person name="Tice H."/>
            <person name="Tsai M."/>
            <person name="Ustaszewska A."/>
            <person name="Vo N."/>
            <person name="Wagner M."/>
            <person name="Wheeler J."/>
            <person name="Wu K."/>
            <person name="Xie G."/>
            <person name="Yang J."/>
            <person name="Dubchak I."/>
            <person name="Furey T.S."/>
            <person name="DeJong P."/>
            <person name="Dickson M."/>
            <person name="Gordon D."/>
            <person name="Eichler E.E."/>
            <person name="Pennacchio L.A."/>
            <person name="Richardson P."/>
            <person name="Stubbs L."/>
            <person name="Rokhsar D.S."/>
            <person name="Myers R.M."/>
            <person name="Rubin E.M."/>
            <person name="Lucas S.M."/>
        </authorList>
    </citation>
    <scope>NUCLEOTIDE SEQUENCE [LARGE SCALE GENOMIC DNA]</scope>
</reference>
<reference key="2">
    <citation type="submission" date="2005-09" db="EMBL/GenBank/DDBJ databases">
        <authorList>
            <person name="Mural R.J."/>
            <person name="Istrail S."/>
            <person name="Sutton G.G."/>
            <person name="Florea L."/>
            <person name="Halpern A.L."/>
            <person name="Mobarry C.M."/>
            <person name="Lippert R."/>
            <person name="Walenz B."/>
            <person name="Shatkay H."/>
            <person name="Dew I."/>
            <person name="Miller J.R."/>
            <person name="Flanigan M.J."/>
            <person name="Edwards N.J."/>
            <person name="Bolanos R."/>
            <person name="Fasulo D."/>
            <person name="Halldorsson B.V."/>
            <person name="Hannenhalli S."/>
            <person name="Turner R."/>
            <person name="Yooseph S."/>
            <person name="Lu F."/>
            <person name="Nusskern D.R."/>
            <person name="Shue B.C."/>
            <person name="Zheng X.H."/>
            <person name="Zhong F."/>
            <person name="Delcher A.L."/>
            <person name="Huson D.H."/>
            <person name="Kravitz S.A."/>
            <person name="Mouchard L."/>
            <person name="Reinert K."/>
            <person name="Remington K.A."/>
            <person name="Clark A.G."/>
            <person name="Waterman M.S."/>
            <person name="Eichler E.E."/>
            <person name="Adams M.D."/>
            <person name="Hunkapiller M.W."/>
            <person name="Myers E.W."/>
            <person name="Venter J.C."/>
        </authorList>
    </citation>
    <scope>NUCLEOTIDE SEQUENCE [LARGE SCALE GENOMIC DNA]</scope>
</reference>
<reference key="3">
    <citation type="journal article" date="2004" name="Genome Res.">
        <title>The status, quality, and expansion of the NIH full-length cDNA project: the Mammalian Gene Collection (MGC).</title>
        <authorList>
            <consortium name="The MGC Project Team"/>
        </authorList>
    </citation>
    <scope>NUCLEOTIDE SEQUENCE [LARGE SCALE MRNA] (ISOFORMS 1 AND 2)</scope>
    <source>
        <tissue>Brain</tissue>
        <tissue>Hypothalamus</tissue>
        <tissue>Skin</tissue>
    </source>
</reference>
<reference key="4">
    <citation type="journal article" date="2012" name="Proc. Natl. Acad. Sci. U.S.A.">
        <title>N-terminal acetylome analyses and functional insights of the N-terminal acetyltransferase NatB.</title>
        <authorList>
            <person name="Van Damme P."/>
            <person name="Lasa M."/>
            <person name="Polevoda B."/>
            <person name="Gazquez C."/>
            <person name="Elosegui-Artola A."/>
            <person name="Kim D.S."/>
            <person name="De Juan-Pardo E."/>
            <person name="Demeyer K."/>
            <person name="Hole K."/>
            <person name="Larrea E."/>
            <person name="Timmerman E."/>
            <person name="Prieto J."/>
            <person name="Arnesen T."/>
            <person name="Sherman F."/>
            <person name="Gevaert K."/>
            <person name="Aldabe R."/>
        </authorList>
    </citation>
    <scope>IDENTIFICATION BY MASS SPECTROMETRY [LARGE SCALE ANALYSIS]</scope>
</reference>
<reference key="5">
    <citation type="journal article" date="2015" name="Cell Rep.">
        <title>An organellar nalpha-acetyltransferase, naa60, acetylates cytosolic N termini of transmembrane proteins and maintains Golgi integrity.</title>
        <authorList>
            <person name="Aksnes H."/>
            <person name="Van Damme P."/>
            <person name="Goris M."/>
            <person name="Starheim K.K."/>
            <person name="Marie M."/>
            <person name="Stoeve S.I."/>
            <person name="Hoel C."/>
            <person name="Kalvik T.V."/>
            <person name="Hole K."/>
            <person name="Glomnes N."/>
            <person name="Furnes C."/>
            <person name="Ljostveit S."/>
            <person name="Ziegler M."/>
            <person name="Niere M."/>
            <person name="Gevaert K."/>
            <person name="Arnesen T."/>
        </authorList>
    </citation>
    <scope>ACETYLATION AT MET-1</scope>
</reference>
<reference key="6">
    <citation type="journal article" date="2017" name="Science">
        <title>Loci associated with skin pigmentation identified in African populations.</title>
        <authorList>
            <consortium name="NISC Comparative Sequencing Program"/>
            <person name="Crawford N.G."/>
            <person name="Kelly D.E."/>
            <person name="Hansen M.E.B."/>
            <person name="Beltrame M.H."/>
            <person name="Fan S."/>
            <person name="Bowman S.L."/>
            <person name="Jewett E."/>
            <person name="Ranciaro A."/>
            <person name="Thompson S."/>
            <person name="Lo Y."/>
            <person name="Pfeifer S.P."/>
            <person name="Jensen J.D."/>
            <person name="Campbell M.C."/>
            <person name="Beggs W."/>
            <person name="Hormozdiari F."/>
            <person name="Mpoloka S.W."/>
            <person name="Mokone G.G."/>
            <person name="Nyambo T."/>
            <person name="Meskel D.W."/>
            <person name="Belay G."/>
            <person name="Haut J."/>
            <person name="Rothschild H."/>
            <person name="Zon L."/>
            <person name="Zhou Y."/>
            <person name="Kovacs M.A."/>
            <person name="Xu M."/>
            <person name="Zhang T."/>
            <person name="Bishop K."/>
            <person name="Sinclair J."/>
            <person name="Rivas C."/>
            <person name="Elliot E."/>
            <person name="Choi J."/>
            <person name="Li S.A."/>
            <person name="Hicks B."/>
            <person name="Burgess S."/>
            <person name="Abnet C."/>
            <person name="Watkins-Chow D.E."/>
            <person name="Oceana E."/>
            <person name="Song Y.S."/>
            <person name="Eskin E."/>
            <person name="Brown K.M."/>
            <person name="Marks M.S."/>
            <person name="Loftus S.K."/>
            <person name="Pavan W.J."/>
            <person name="Yeager M."/>
            <person name="Chanock S."/>
            <person name="Tishkoff S.A."/>
        </authorList>
    </citation>
    <scope>SUBCELLULAR LOCATION</scope>
    <scope>POLYMORPHISM</scope>
</reference>
<reference key="7">
    <citation type="journal article" date="2019" name="Nat. Commun.">
        <title>A GWAS in Latin Americans highlights the convergent evolution of lighter skin pigmentation in Eurasia.</title>
        <authorList>
            <person name="Adhikari K."/>
            <person name="Mendoza-Revilla J."/>
            <person name="Sohail A."/>
            <person name="Fuentes-Guajardo M."/>
            <person name="Lampert J."/>
            <person name="Chacon-Duque J.C."/>
            <person name="Hurtado M."/>
            <person name="Villegas V."/>
            <person name="Granja V."/>
            <person name="Acuna-Alonzo V."/>
            <person name="Jaramillo C."/>
            <person name="Arias W."/>
            <person name="Lozano R.B."/>
            <person name="Everardo P."/>
            <person name="Gomez-Valdes J."/>
            <person name="Villamil-Ramirez H."/>
            <person name="Silva de Cerqueira C.C."/>
            <person name="Hunemeier T."/>
            <person name="Ramallo V."/>
            <person name="Schuler-Faccini L."/>
            <person name="Salzano F.M."/>
            <person name="Gonzalez-Jose R."/>
            <person name="Bortolini M.C."/>
            <person name="Canizales-Quinteros S."/>
            <person name="Gallo C."/>
            <person name="Poletti G."/>
            <person name="Bedoya G."/>
            <person name="Rothhammer F."/>
            <person name="Tobin D.J."/>
            <person name="Fumagalli M."/>
            <person name="Balding D."/>
            <person name="Ruiz-Linares A."/>
        </authorList>
    </citation>
    <scope>POLYMORPHISM</scope>
    <scope>VARIANT HIS-182</scope>
</reference>
<reference key="8">
    <citation type="journal article" date="2020" name="Nature">
        <title>MFSD12 mediates the import of cysteine into melanosomes and lysosomes.</title>
        <authorList>
            <person name="Adelmann C.H."/>
            <person name="Traunbauer A.K."/>
            <person name="Chen B."/>
            <person name="Condon K.J."/>
            <person name="Chan S.H."/>
            <person name="Kunchok T."/>
            <person name="Lewis C.A."/>
            <person name="Sabatini D.M."/>
        </authorList>
    </citation>
    <scope>FUNCTION</scope>
    <scope>CATALYTIC ACTIVITY</scope>
    <scope>SUBCELLULAR LOCATION</scope>
    <scope>TISSUE SPECIFICITY</scope>
    <scope>MUTAGENESIS OF 256-LEU-LEU-257</scope>
</reference>
<reference key="9">
    <citation type="journal article" date="2023" name="Mol. Cell">
        <title>Lysosomal cyst(e)ine storage potentiates tolerance to oxidative stress in cancer cells.</title>
        <authorList>
            <person name="He L."/>
            <person name="Chen J."/>
            <person name="Deng P."/>
            <person name="Huang S."/>
            <person name="Liu P."/>
            <person name="Wang C."/>
            <person name="Huang X."/>
            <person name="Li Y."/>
            <person name="Chen B."/>
            <person name="Shi D."/>
            <person name="Xiao Y."/>
            <person name="Chen X."/>
            <person name="Ouyang Y."/>
            <person name="Song L."/>
            <person name="Lin C."/>
        </authorList>
    </citation>
    <scope>FUNCTION</scope>
    <scope>TRANSPORTER ACTIVITY</scope>
    <scope>SUBCELLULAR LOCATION</scope>
    <scope>PHOSPHORYLATION AT THR-254</scope>
    <scope>MUTAGENESIS OF SER-13; THR-73; SER-113; THR-122 AND THR-254</scope>
</reference>
<proteinExistence type="evidence at protein level"/>
<gene>
    <name evidence="8 10" type="primary">MFSD12</name>
    <name evidence="10" type="synonym">C19orf28</name>
</gene>
<comment type="function">
    <text evidence="5 6">Transporter that mediates the import of cysteine into melanosomes, thereby regulating skin pigmentation (PubMed:33208952, PubMed:37751742). In melanosomes, cysteine import is required both for normal levels of cystine, the oxidized dimer of cysteine, and provide cysteine for the production of the cysteinyldopas used in pheomelanin synthesis, thereby regulating skin pigmentation (PubMed:33208952). Also catalyzes import of cysteine into lysosomes in non-pigmented cells, regulating lysosomal cystine and cysteine storage, which is essnetial for redox homeostasis (PubMed:33208952, PubMed:37751742).</text>
</comment>
<comment type="catalytic activity">
    <reaction evidence="5 6">
        <text>L-cysteine(in) = L-cysteine(out)</text>
        <dbReference type="Rhea" id="RHEA:29655"/>
        <dbReference type="ChEBI" id="CHEBI:35235"/>
    </reaction>
    <physiologicalReaction direction="left-to-right" evidence="5 6">
        <dbReference type="Rhea" id="RHEA:29656"/>
    </physiologicalReaction>
</comment>
<comment type="interaction">
    <interactant intactId="EBI-17295698">
        <id>Q6NUT3-2</id>
    </interactant>
    <interactant intactId="EBI-7797864">
        <id>P11912</id>
        <label>CD79A</label>
    </interactant>
    <organismsDiffer>false</organismsDiffer>
    <experiments>3</experiments>
</comment>
<comment type="interaction">
    <interactant intactId="EBI-17295698">
        <id>Q6NUT3-2</id>
    </interactant>
    <interactant intactId="EBI-17280858">
        <id>Q8WWF3</id>
        <label>SSMEM1</label>
    </interactant>
    <organismsDiffer>false</organismsDiffer>
    <experiments>3</experiments>
</comment>
<comment type="interaction">
    <interactant intactId="EBI-17295698">
        <id>Q6NUT3-2</id>
    </interactant>
    <interactant intactId="EBI-8638294">
        <id>Q9NUH8</id>
        <label>TMEM14B</label>
    </interactant>
    <organismsDiffer>false</organismsDiffer>
    <experiments>3</experiments>
</comment>
<comment type="subcellular location">
    <subcellularLocation>
        <location evidence="5">Melanosome membrane</location>
        <topology evidence="1">Multi-pass membrane protein</topology>
    </subcellularLocation>
    <subcellularLocation>
        <location evidence="3 5 6">Lysosome membrane</location>
        <topology evidence="1">Multi-pass membrane protein</topology>
    </subcellularLocation>
</comment>
<comment type="alternative products">
    <event type="alternative splicing"/>
    <isoform>
        <id>Q6NUT3-1</id>
        <name>1</name>
        <sequence type="displayed"/>
    </isoform>
    <isoform>
        <id>Q6NUT3-2</id>
        <name>2</name>
        <sequence type="described" ref="VSP_022779"/>
    </isoform>
    <isoform>
        <id>Q6NUT3-3</id>
        <name>3</name>
        <sequence type="described" ref="VSP_047665"/>
    </isoform>
    <isoform>
        <id>Q6NUT3-4</id>
        <name>4</name>
        <sequence type="described" ref="VSP_047666"/>
    </isoform>
</comment>
<comment type="tissue specificity">
    <text evidence="3 5">Widely expressed, with high expression in primary melanocytes.</text>
</comment>
<comment type="PTM">
    <text evidence="6">Phosphorylation at Thr-254 by MTOR via mTORC1 pathway promotes cysteine transport in lysosomes, thereby regulating lysosomal cysteine and cystine storage and redox homeostasis.</text>
</comment>
<comment type="polymorphism">
    <text evidence="3 4">Genetic variants in MFSD12 cause skin pigmentation variation (PubMed:29025994, PubMed:30664655). Skin pigmentation is among the most visible examples of human phenotypic variation, with a broad normal range that is subject to substantial geographic stratification (PubMed:29025994, PubMed:30664655). In the case of skin, individuals tend to have lighter pigmentation with increasing distance from the equator (PubMed:29025994, PubMed:30664655). His-192 is commonly found in East Asians and Native Americans only, and significantly correlates with lower solar radiation intensity in East Asia (PubMed:30664655).</text>
</comment>
<comment type="similarity">
    <text evidence="9">Belongs to the major facilitator superfamily.</text>
</comment>
<organism>
    <name type="scientific">Homo sapiens</name>
    <name type="common">Human</name>
    <dbReference type="NCBI Taxonomy" id="9606"/>
    <lineage>
        <taxon>Eukaryota</taxon>
        <taxon>Metazoa</taxon>
        <taxon>Chordata</taxon>
        <taxon>Craniata</taxon>
        <taxon>Vertebrata</taxon>
        <taxon>Euteleostomi</taxon>
        <taxon>Mammalia</taxon>
        <taxon>Eutheria</taxon>
        <taxon>Euarchontoglires</taxon>
        <taxon>Primates</taxon>
        <taxon>Haplorrhini</taxon>
        <taxon>Catarrhini</taxon>
        <taxon>Hominidae</taxon>
        <taxon>Homo</taxon>
    </lineage>
</organism>
<protein>
    <recommendedName>
        <fullName evidence="9">Major facilitator superfamily domain-containing protein 12</fullName>
    </recommendedName>
</protein>
<evidence type="ECO:0000255" key="1"/>
<evidence type="ECO:0000269" key="2">
    <source>
    </source>
</evidence>
<evidence type="ECO:0000269" key="3">
    <source>
    </source>
</evidence>
<evidence type="ECO:0000269" key="4">
    <source>
    </source>
</evidence>
<evidence type="ECO:0000269" key="5">
    <source>
    </source>
</evidence>
<evidence type="ECO:0000269" key="6">
    <source>
    </source>
</evidence>
<evidence type="ECO:0000303" key="7">
    <source>
    </source>
</evidence>
<evidence type="ECO:0000303" key="8">
    <source>
    </source>
</evidence>
<evidence type="ECO:0000305" key="9"/>
<evidence type="ECO:0000312" key="10">
    <source>
        <dbReference type="HGNC" id="HGNC:28299"/>
    </source>
</evidence>
<name>MFS12_HUMAN</name>
<dbReference type="EMBL" id="AC005786">
    <property type="status" value="NOT_ANNOTATED_CDS"/>
    <property type="molecule type" value="Genomic_DNA"/>
</dbReference>
<dbReference type="EMBL" id="AC005787">
    <property type="status" value="NOT_ANNOTATED_CDS"/>
    <property type="molecule type" value="Genomic_DNA"/>
</dbReference>
<dbReference type="EMBL" id="CH471139">
    <property type="protein sequence ID" value="EAW69309.1"/>
    <property type="molecule type" value="Genomic_DNA"/>
</dbReference>
<dbReference type="EMBL" id="CH471139">
    <property type="protein sequence ID" value="EAW69311.1"/>
    <property type="molecule type" value="Genomic_DNA"/>
</dbReference>
<dbReference type="EMBL" id="BC036706">
    <property type="protein sequence ID" value="AAH36706.1"/>
    <property type="molecule type" value="mRNA"/>
</dbReference>
<dbReference type="EMBL" id="BC068439">
    <property type="protein sequence ID" value="AAH68439.1"/>
    <property type="molecule type" value="mRNA"/>
</dbReference>
<dbReference type="CCDS" id="CCDS42465.1">
    <molecule id="Q6NUT3-1"/>
</dbReference>
<dbReference type="CCDS" id="CCDS74256.1">
    <molecule id="Q6NUT3-2"/>
</dbReference>
<dbReference type="RefSeq" id="NP_001274458.1">
    <molecule id="Q6NUT3-2"/>
    <property type="nucleotide sequence ID" value="NM_001287529.2"/>
</dbReference>
<dbReference type="RefSeq" id="NP_778148.2">
    <molecule id="Q6NUT3-1"/>
    <property type="nucleotide sequence ID" value="NM_174983.5"/>
</dbReference>
<dbReference type="RefSeq" id="XP_006722710.1">
    <property type="nucleotide sequence ID" value="XM_006722647.3"/>
</dbReference>
<dbReference type="RefSeq" id="XP_011525986.1">
    <molecule id="Q6NUT3-4"/>
    <property type="nucleotide sequence ID" value="XM_011527684.3"/>
</dbReference>
<dbReference type="RefSeq" id="XP_047294126.1">
    <molecule id="Q6NUT3-3"/>
    <property type="nucleotide sequence ID" value="XM_047438170.1"/>
</dbReference>
<dbReference type="RefSeq" id="XP_054175774.1">
    <molecule id="Q6NUT3-3"/>
    <property type="nucleotide sequence ID" value="XM_054319799.1"/>
</dbReference>
<dbReference type="RefSeq" id="XP_054175776.1">
    <molecule id="Q6NUT3-4"/>
    <property type="nucleotide sequence ID" value="XM_054319801.1"/>
</dbReference>
<dbReference type="SMR" id="Q6NUT3"/>
<dbReference type="BioGRID" id="125979">
    <property type="interactions" value="35"/>
</dbReference>
<dbReference type="FunCoup" id="Q6NUT3">
    <property type="interactions" value="429"/>
</dbReference>
<dbReference type="IntAct" id="Q6NUT3">
    <property type="interactions" value="27"/>
</dbReference>
<dbReference type="MINT" id="Q6NUT3"/>
<dbReference type="STRING" id="9606.ENSP00000347583"/>
<dbReference type="TCDB" id="2.A.2.7.3">
    <property type="family name" value="the glycoside-pentoside-hexuronide (gph):cation symporter family"/>
</dbReference>
<dbReference type="GlyCosmos" id="Q6NUT3">
    <property type="glycosylation" value="1 site, 1 glycan"/>
</dbReference>
<dbReference type="GlyGen" id="Q6NUT3">
    <property type="glycosylation" value="1 site, 2 O-linked glycans (1 site)"/>
</dbReference>
<dbReference type="iPTMnet" id="Q6NUT3"/>
<dbReference type="PhosphoSitePlus" id="Q6NUT3"/>
<dbReference type="SwissPalm" id="Q6NUT3"/>
<dbReference type="BioMuta" id="MFSD12"/>
<dbReference type="DMDM" id="125991816"/>
<dbReference type="jPOST" id="Q6NUT3"/>
<dbReference type="MassIVE" id="Q6NUT3"/>
<dbReference type="PaxDb" id="9606-ENSP00000347583"/>
<dbReference type="PeptideAtlas" id="Q6NUT3"/>
<dbReference type="ProteomicsDB" id="19029"/>
<dbReference type="ProteomicsDB" id="2337"/>
<dbReference type="ProteomicsDB" id="66712">
    <molecule id="Q6NUT3-1"/>
</dbReference>
<dbReference type="ProteomicsDB" id="66713">
    <molecule id="Q6NUT3-2"/>
</dbReference>
<dbReference type="Pumba" id="Q6NUT3"/>
<dbReference type="Antibodypedia" id="23242">
    <property type="antibodies" value="63 antibodies from 17 providers"/>
</dbReference>
<dbReference type="DNASU" id="126321"/>
<dbReference type="Ensembl" id="ENST00000355415.7">
    <molecule id="Q6NUT3-1"/>
    <property type="protein sequence ID" value="ENSP00000347583.1"/>
    <property type="gene ID" value="ENSG00000161091.15"/>
</dbReference>
<dbReference type="Ensembl" id="ENST00000588918.5">
    <molecule id="Q6NUT3-2"/>
    <property type="protein sequence ID" value="ENSP00000467207.1"/>
    <property type="gene ID" value="ENSG00000161091.15"/>
</dbReference>
<dbReference type="GeneID" id="126321"/>
<dbReference type="KEGG" id="hsa:126321"/>
<dbReference type="MANE-Select" id="ENST00000355415.7">
    <property type="protein sequence ID" value="ENSP00000347583.1"/>
    <property type="RefSeq nucleotide sequence ID" value="NM_174983.5"/>
    <property type="RefSeq protein sequence ID" value="NP_778148.2"/>
</dbReference>
<dbReference type="UCSC" id="uc002lxz.5">
    <molecule id="Q6NUT3-1"/>
    <property type="organism name" value="human"/>
</dbReference>
<dbReference type="AGR" id="HGNC:28299"/>
<dbReference type="CTD" id="126321"/>
<dbReference type="DisGeNET" id="126321"/>
<dbReference type="GeneCards" id="MFSD12"/>
<dbReference type="HGNC" id="HGNC:28299">
    <property type="gene designation" value="MFSD12"/>
</dbReference>
<dbReference type="HPA" id="ENSG00000161091">
    <property type="expression patterns" value="Low tissue specificity"/>
</dbReference>
<dbReference type="MIM" id="617745">
    <property type="type" value="gene"/>
</dbReference>
<dbReference type="neXtProt" id="NX_Q6NUT3"/>
<dbReference type="OpenTargets" id="ENSG00000161091"/>
<dbReference type="PharmGKB" id="PA134955537"/>
<dbReference type="VEuPathDB" id="HostDB:ENSG00000161091"/>
<dbReference type="eggNOG" id="KOG4830">
    <property type="taxonomic scope" value="Eukaryota"/>
</dbReference>
<dbReference type="GeneTree" id="ENSGT00390000005318"/>
<dbReference type="HOGENOM" id="CLU_030068_1_0_1"/>
<dbReference type="InParanoid" id="Q6NUT3"/>
<dbReference type="OMA" id="GLYTAWM"/>
<dbReference type="OrthoDB" id="1730117at2759"/>
<dbReference type="PAN-GO" id="Q6NUT3">
    <property type="GO annotations" value="3 GO annotations based on evolutionary models"/>
</dbReference>
<dbReference type="PhylomeDB" id="Q6NUT3"/>
<dbReference type="TreeFam" id="TF314080"/>
<dbReference type="PathwayCommons" id="Q6NUT3"/>
<dbReference type="SignaLink" id="Q6NUT3"/>
<dbReference type="BioGRID-ORCS" id="126321">
    <property type="hits" value="21 hits in 1150 CRISPR screens"/>
</dbReference>
<dbReference type="ChiTaRS" id="MFSD12">
    <property type="organism name" value="human"/>
</dbReference>
<dbReference type="GenomeRNAi" id="126321"/>
<dbReference type="Pharos" id="Q6NUT3">
    <property type="development level" value="Tbio"/>
</dbReference>
<dbReference type="PRO" id="PR:Q6NUT3"/>
<dbReference type="Proteomes" id="UP000005640">
    <property type="component" value="Chromosome 19"/>
</dbReference>
<dbReference type="RNAct" id="Q6NUT3">
    <property type="molecule type" value="protein"/>
</dbReference>
<dbReference type="Bgee" id="ENSG00000161091">
    <property type="expression patterns" value="Expressed in stromal cell of endometrium and 159 other cell types or tissues"/>
</dbReference>
<dbReference type="ExpressionAtlas" id="Q6NUT3">
    <property type="expression patterns" value="baseline and differential"/>
</dbReference>
<dbReference type="GO" id="GO:0005770">
    <property type="term" value="C:late endosome"/>
    <property type="evidence" value="ECO:0000314"/>
    <property type="project" value="CACAO"/>
</dbReference>
<dbReference type="GO" id="GO:0005765">
    <property type="term" value="C:lysosomal membrane"/>
    <property type="evidence" value="ECO:0007005"/>
    <property type="project" value="UniProtKB"/>
</dbReference>
<dbReference type="GO" id="GO:0005764">
    <property type="term" value="C:lysosome"/>
    <property type="evidence" value="ECO:0000314"/>
    <property type="project" value="UniProtKB"/>
</dbReference>
<dbReference type="GO" id="GO:0042470">
    <property type="term" value="C:melanosome"/>
    <property type="evidence" value="ECO:0000314"/>
    <property type="project" value="UniProtKB"/>
</dbReference>
<dbReference type="GO" id="GO:0033162">
    <property type="term" value="C:melanosome membrane"/>
    <property type="evidence" value="ECO:0007669"/>
    <property type="project" value="UniProtKB-SubCell"/>
</dbReference>
<dbReference type="GO" id="GO:0005886">
    <property type="term" value="C:plasma membrane"/>
    <property type="evidence" value="ECO:0000318"/>
    <property type="project" value="GO_Central"/>
</dbReference>
<dbReference type="GO" id="GO:0033229">
    <property type="term" value="F:cysteine transmembrane transporter activity"/>
    <property type="evidence" value="ECO:0000314"/>
    <property type="project" value="UniProtKB"/>
</dbReference>
<dbReference type="GO" id="GO:0015293">
    <property type="term" value="F:symporter activity"/>
    <property type="evidence" value="ECO:0007669"/>
    <property type="project" value="InterPro"/>
</dbReference>
<dbReference type="GO" id="GO:0008643">
    <property type="term" value="P:carbohydrate transport"/>
    <property type="evidence" value="ECO:0007669"/>
    <property type="project" value="InterPro"/>
</dbReference>
<dbReference type="GO" id="GO:1903712">
    <property type="term" value="P:cysteine transmembrane transport"/>
    <property type="evidence" value="ECO:0000314"/>
    <property type="project" value="UniProtKB"/>
</dbReference>
<dbReference type="GO" id="GO:0042438">
    <property type="term" value="P:melanin biosynthetic process"/>
    <property type="evidence" value="ECO:0007669"/>
    <property type="project" value="UniProtKB-KW"/>
</dbReference>
<dbReference type="GO" id="GO:0048022">
    <property type="term" value="P:negative regulation of melanin biosynthetic process"/>
    <property type="evidence" value="ECO:0007669"/>
    <property type="project" value="Ensembl"/>
</dbReference>
<dbReference type="GO" id="GO:0043474">
    <property type="term" value="P:pigment metabolic process involved in pigmentation"/>
    <property type="evidence" value="ECO:0000315"/>
    <property type="project" value="UniProtKB"/>
</dbReference>
<dbReference type="GO" id="GO:0048021">
    <property type="term" value="P:regulation of melanin biosynthetic process"/>
    <property type="evidence" value="ECO:0000315"/>
    <property type="project" value="UniProtKB"/>
</dbReference>
<dbReference type="CDD" id="cd17491">
    <property type="entry name" value="MFS_MFSD12"/>
    <property type="match status" value="1"/>
</dbReference>
<dbReference type="FunFam" id="1.20.1250.20:FF:000206">
    <property type="entry name" value="Major facilitator superfamily domain containing 12"/>
    <property type="match status" value="1"/>
</dbReference>
<dbReference type="FunFam" id="1.20.1250.20:FF:000219">
    <property type="entry name" value="major facilitator superfamily domain-containing protein 12 isoform X3"/>
    <property type="match status" value="1"/>
</dbReference>
<dbReference type="Gene3D" id="1.20.1250.20">
    <property type="entry name" value="MFS general substrate transporter like domains"/>
    <property type="match status" value="2"/>
</dbReference>
<dbReference type="InterPro" id="IPR039672">
    <property type="entry name" value="MFS_2"/>
</dbReference>
<dbReference type="InterPro" id="IPR036259">
    <property type="entry name" value="MFS_trans_sf"/>
</dbReference>
<dbReference type="PANTHER" id="PTHR11328">
    <property type="entry name" value="MAJOR FACILITATOR SUPERFAMILY DOMAIN-CONTAINING PROTEIN"/>
    <property type="match status" value="1"/>
</dbReference>
<dbReference type="PANTHER" id="PTHR11328:SF28">
    <property type="entry name" value="MAJOR FACILITATOR SUPERFAMILY DOMAIN-CONTAINING PROTEIN 12"/>
    <property type="match status" value="1"/>
</dbReference>
<dbReference type="Pfam" id="PF13347">
    <property type="entry name" value="MFS_2"/>
    <property type="match status" value="1"/>
</dbReference>
<dbReference type="SUPFAM" id="SSF103473">
    <property type="entry name" value="MFS general substrate transporter"/>
    <property type="match status" value="1"/>
</dbReference>